<evidence type="ECO:0000255" key="1">
    <source>
        <dbReference type="HAMAP-Rule" id="MF_01346"/>
    </source>
</evidence>
<organism>
    <name type="scientific">Staphylococcus aureus (strain Newman)</name>
    <dbReference type="NCBI Taxonomy" id="426430"/>
    <lineage>
        <taxon>Bacteria</taxon>
        <taxon>Bacillati</taxon>
        <taxon>Bacillota</taxon>
        <taxon>Bacilli</taxon>
        <taxon>Bacillales</taxon>
        <taxon>Staphylococcaceae</taxon>
        <taxon>Staphylococcus</taxon>
    </lineage>
</organism>
<reference key="1">
    <citation type="journal article" date="2008" name="J. Bacteriol.">
        <title>Genome sequence of Staphylococcus aureus strain Newman and comparative analysis of staphylococcal genomes: polymorphism and evolution of two major pathogenicity islands.</title>
        <authorList>
            <person name="Baba T."/>
            <person name="Bae T."/>
            <person name="Schneewind O."/>
            <person name="Takeuchi F."/>
            <person name="Hiramatsu K."/>
        </authorList>
    </citation>
    <scope>NUCLEOTIDE SEQUENCE [LARGE SCALE GENOMIC DNA]</scope>
    <source>
        <strain>Newman</strain>
    </source>
</reference>
<protein>
    <recommendedName>
        <fullName evidence="1">ATP synthase subunit alpha</fullName>
        <ecNumber evidence="1">7.1.2.2</ecNumber>
    </recommendedName>
    <alternativeName>
        <fullName evidence="1">ATP synthase F1 sector subunit alpha</fullName>
    </alternativeName>
    <alternativeName>
        <fullName evidence="1">F-ATPase subunit alpha</fullName>
    </alternativeName>
</protein>
<comment type="function">
    <text evidence="1">Produces ATP from ADP in the presence of a proton gradient across the membrane. The alpha chain is a regulatory subunit.</text>
</comment>
<comment type="catalytic activity">
    <reaction evidence="1">
        <text>ATP + H2O + 4 H(+)(in) = ADP + phosphate + 5 H(+)(out)</text>
        <dbReference type="Rhea" id="RHEA:57720"/>
        <dbReference type="ChEBI" id="CHEBI:15377"/>
        <dbReference type="ChEBI" id="CHEBI:15378"/>
        <dbReference type="ChEBI" id="CHEBI:30616"/>
        <dbReference type="ChEBI" id="CHEBI:43474"/>
        <dbReference type="ChEBI" id="CHEBI:456216"/>
        <dbReference type="EC" id="7.1.2.2"/>
    </reaction>
</comment>
<comment type="subunit">
    <text evidence="1">F-type ATPases have 2 components, CF(1) - the catalytic core - and CF(0) - the membrane proton channel. CF(1) has five subunits: alpha(3), beta(3), gamma(1), delta(1), epsilon(1). CF(0) has three main subunits: a(1), b(2) and c(9-12). The alpha and beta chains form an alternating ring which encloses part of the gamma chain. CF(1) is attached to CF(0) by a central stalk formed by the gamma and epsilon chains, while a peripheral stalk is formed by the delta and b chains.</text>
</comment>
<comment type="subcellular location">
    <subcellularLocation>
        <location evidence="1">Cell membrane</location>
        <topology evidence="1">Peripheral membrane protein</topology>
    </subcellularLocation>
</comment>
<comment type="similarity">
    <text evidence="1">Belongs to the ATPase alpha/beta chains family.</text>
</comment>
<keyword id="KW-0066">ATP synthesis</keyword>
<keyword id="KW-0067">ATP-binding</keyword>
<keyword id="KW-1003">Cell membrane</keyword>
<keyword id="KW-0139">CF(1)</keyword>
<keyword id="KW-0375">Hydrogen ion transport</keyword>
<keyword id="KW-0406">Ion transport</keyword>
<keyword id="KW-0472">Membrane</keyword>
<keyword id="KW-0547">Nucleotide-binding</keyword>
<keyword id="KW-1278">Translocase</keyword>
<keyword id="KW-0813">Transport</keyword>
<dbReference type="EC" id="7.1.2.2" evidence="1"/>
<dbReference type="EMBL" id="AP009351">
    <property type="protein sequence ID" value="BAF68281.1"/>
    <property type="molecule type" value="Genomic_DNA"/>
</dbReference>
<dbReference type="RefSeq" id="WP_000974882.1">
    <property type="nucleotide sequence ID" value="NZ_JBBIAE010000008.1"/>
</dbReference>
<dbReference type="SMR" id="A6QIU9"/>
<dbReference type="KEGG" id="sae:NWMN_2009"/>
<dbReference type="HOGENOM" id="CLU_010091_2_1_9"/>
<dbReference type="Proteomes" id="UP000006386">
    <property type="component" value="Chromosome"/>
</dbReference>
<dbReference type="GO" id="GO:0005886">
    <property type="term" value="C:plasma membrane"/>
    <property type="evidence" value="ECO:0007669"/>
    <property type="project" value="UniProtKB-SubCell"/>
</dbReference>
<dbReference type="GO" id="GO:0045259">
    <property type="term" value="C:proton-transporting ATP synthase complex"/>
    <property type="evidence" value="ECO:0007669"/>
    <property type="project" value="UniProtKB-KW"/>
</dbReference>
<dbReference type="GO" id="GO:0043531">
    <property type="term" value="F:ADP binding"/>
    <property type="evidence" value="ECO:0007669"/>
    <property type="project" value="TreeGrafter"/>
</dbReference>
<dbReference type="GO" id="GO:0005524">
    <property type="term" value="F:ATP binding"/>
    <property type="evidence" value="ECO:0007669"/>
    <property type="project" value="UniProtKB-UniRule"/>
</dbReference>
<dbReference type="GO" id="GO:0046933">
    <property type="term" value="F:proton-transporting ATP synthase activity, rotational mechanism"/>
    <property type="evidence" value="ECO:0007669"/>
    <property type="project" value="UniProtKB-UniRule"/>
</dbReference>
<dbReference type="CDD" id="cd18113">
    <property type="entry name" value="ATP-synt_F1_alpha_C"/>
    <property type="match status" value="1"/>
</dbReference>
<dbReference type="CDD" id="cd18116">
    <property type="entry name" value="ATP-synt_F1_alpha_N"/>
    <property type="match status" value="1"/>
</dbReference>
<dbReference type="CDD" id="cd01132">
    <property type="entry name" value="F1-ATPase_alpha_CD"/>
    <property type="match status" value="1"/>
</dbReference>
<dbReference type="FunFam" id="1.20.150.20:FF:000001">
    <property type="entry name" value="ATP synthase subunit alpha"/>
    <property type="match status" value="1"/>
</dbReference>
<dbReference type="FunFam" id="2.40.30.20:FF:000001">
    <property type="entry name" value="ATP synthase subunit alpha"/>
    <property type="match status" value="1"/>
</dbReference>
<dbReference type="FunFam" id="3.40.50.300:FF:000002">
    <property type="entry name" value="ATP synthase subunit alpha"/>
    <property type="match status" value="1"/>
</dbReference>
<dbReference type="Gene3D" id="2.40.30.20">
    <property type="match status" value="1"/>
</dbReference>
<dbReference type="Gene3D" id="1.20.150.20">
    <property type="entry name" value="ATP synthase alpha/beta chain, C-terminal domain"/>
    <property type="match status" value="1"/>
</dbReference>
<dbReference type="Gene3D" id="3.40.50.300">
    <property type="entry name" value="P-loop containing nucleotide triphosphate hydrolases"/>
    <property type="match status" value="1"/>
</dbReference>
<dbReference type="HAMAP" id="MF_01346">
    <property type="entry name" value="ATP_synth_alpha_bact"/>
    <property type="match status" value="1"/>
</dbReference>
<dbReference type="InterPro" id="IPR023366">
    <property type="entry name" value="ATP_synth_asu-like_sf"/>
</dbReference>
<dbReference type="InterPro" id="IPR000793">
    <property type="entry name" value="ATP_synth_asu_C"/>
</dbReference>
<dbReference type="InterPro" id="IPR038376">
    <property type="entry name" value="ATP_synth_asu_C_sf"/>
</dbReference>
<dbReference type="InterPro" id="IPR033732">
    <property type="entry name" value="ATP_synth_F1_a_nt-bd_dom"/>
</dbReference>
<dbReference type="InterPro" id="IPR005294">
    <property type="entry name" value="ATP_synth_F1_asu"/>
</dbReference>
<dbReference type="InterPro" id="IPR020003">
    <property type="entry name" value="ATPase_a/bsu_AS"/>
</dbReference>
<dbReference type="InterPro" id="IPR004100">
    <property type="entry name" value="ATPase_F1/V1/A1_a/bsu_N"/>
</dbReference>
<dbReference type="InterPro" id="IPR036121">
    <property type="entry name" value="ATPase_F1/V1/A1_a/bsu_N_sf"/>
</dbReference>
<dbReference type="InterPro" id="IPR000194">
    <property type="entry name" value="ATPase_F1/V1/A1_a/bsu_nucl-bd"/>
</dbReference>
<dbReference type="InterPro" id="IPR027417">
    <property type="entry name" value="P-loop_NTPase"/>
</dbReference>
<dbReference type="NCBIfam" id="TIGR00962">
    <property type="entry name" value="atpA"/>
    <property type="match status" value="1"/>
</dbReference>
<dbReference type="NCBIfam" id="NF009884">
    <property type="entry name" value="PRK13343.1"/>
    <property type="match status" value="1"/>
</dbReference>
<dbReference type="PANTHER" id="PTHR48082">
    <property type="entry name" value="ATP SYNTHASE SUBUNIT ALPHA, MITOCHONDRIAL"/>
    <property type="match status" value="1"/>
</dbReference>
<dbReference type="PANTHER" id="PTHR48082:SF2">
    <property type="entry name" value="ATP SYNTHASE SUBUNIT ALPHA, MITOCHONDRIAL"/>
    <property type="match status" value="1"/>
</dbReference>
<dbReference type="Pfam" id="PF00006">
    <property type="entry name" value="ATP-synt_ab"/>
    <property type="match status" value="1"/>
</dbReference>
<dbReference type="Pfam" id="PF00306">
    <property type="entry name" value="ATP-synt_ab_C"/>
    <property type="match status" value="1"/>
</dbReference>
<dbReference type="Pfam" id="PF02874">
    <property type="entry name" value="ATP-synt_ab_N"/>
    <property type="match status" value="1"/>
</dbReference>
<dbReference type="PIRSF" id="PIRSF039088">
    <property type="entry name" value="F_ATPase_subunit_alpha"/>
    <property type="match status" value="1"/>
</dbReference>
<dbReference type="SUPFAM" id="SSF47917">
    <property type="entry name" value="C-terminal domain of alpha and beta subunits of F1 ATP synthase"/>
    <property type="match status" value="1"/>
</dbReference>
<dbReference type="SUPFAM" id="SSF50615">
    <property type="entry name" value="N-terminal domain of alpha and beta subunits of F1 ATP synthase"/>
    <property type="match status" value="1"/>
</dbReference>
<dbReference type="SUPFAM" id="SSF52540">
    <property type="entry name" value="P-loop containing nucleoside triphosphate hydrolases"/>
    <property type="match status" value="1"/>
</dbReference>
<dbReference type="PROSITE" id="PS00152">
    <property type="entry name" value="ATPASE_ALPHA_BETA"/>
    <property type="match status" value="1"/>
</dbReference>
<sequence>MAIKAEEISALLRSQIENYESEMSVTDVGTVLQIGDGIALIHGLNDVMAGELVEFHNGVLGLAQNLEESNVGVVILGPYTGITEGDEVKRTGRIMEVPVGEELIGRVVNPLGQPIDGQGPINTTKTRPVEKKATGVMDRKSVDEPLQTGIKAIDALVPIGRGQRELIIGDRQTGKTTIAIDTILNQKDQGTICIYVAIGQKDSTVRANVEKLRQAGALDYTIVVAASASEPSPLLYIAPYSGVTMGEEFMFNGKHVLIVYDDLTKQAAAYRELSLLLRRPPGREAYPGDVFYLHSRLLERAAKLNDDLGGGSITALPIIETQAGDISAYVPTNVISITDGQIFLQSDLFFSGVRPAINAGQSVSRVGGSAQINAMKKVAGTLRLDLASYRELESFAQFGSDLDEFTASKLERGKRTVEVLKQDQNKPLPVEHQVLIIYALTKGYLDDIPVVDITRFEDELNHWAESNATELLNEIRETGGLPDAEKFDTAINEFKKSFSKSE</sequence>
<feature type="chain" id="PRO_1000073359" description="ATP synthase subunit alpha">
    <location>
        <begin position="1"/>
        <end position="502"/>
    </location>
</feature>
<feature type="binding site" evidence="1">
    <location>
        <begin position="169"/>
        <end position="176"/>
    </location>
    <ligand>
        <name>ATP</name>
        <dbReference type="ChEBI" id="CHEBI:30616"/>
    </ligand>
</feature>
<feature type="site" description="Required for activity" evidence="1">
    <location>
        <position position="362"/>
    </location>
</feature>
<proteinExistence type="inferred from homology"/>
<accession>A6QIU9</accession>
<gene>
    <name evidence="1" type="primary">atpA</name>
    <name type="ordered locus">NWMN_2009</name>
</gene>
<name>ATPA_STAAE</name>